<keyword id="KW-0963">Cytoplasm</keyword>
<keyword id="KW-0378">Hydrolase</keyword>
<keyword id="KW-1185">Reference proteome</keyword>
<keyword id="KW-0694">RNA-binding</keyword>
<keyword id="KW-0820">tRNA-binding</keyword>
<dbReference type="EC" id="3.1.1.96" evidence="1"/>
<dbReference type="EMBL" id="CP000411">
    <property type="protein sequence ID" value="ABJ56023.1"/>
    <property type="molecule type" value="Genomic_DNA"/>
</dbReference>
<dbReference type="RefSeq" id="WP_002817946.1">
    <property type="nucleotide sequence ID" value="NC_008528.1"/>
</dbReference>
<dbReference type="SMR" id="Q04HP9"/>
<dbReference type="STRING" id="203123.OEOE_0019"/>
<dbReference type="GeneID" id="75064871"/>
<dbReference type="KEGG" id="ooe:OEOE_0019"/>
<dbReference type="eggNOG" id="COG1490">
    <property type="taxonomic scope" value="Bacteria"/>
</dbReference>
<dbReference type="HOGENOM" id="CLU_076901_1_0_9"/>
<dbReference type="Proteomes" id="UP000000774">
    <property type="component" value="Chromosome"/>
</dbReference>
<dbReference type="GO" id="GO:0005737">
    <property type="term" value="C:cytoplasm"/>
    <property type="evidence" value="ECO:0007669"/>
    <property type="project" value="UniProtKB-SubCell"/>
</dbReference>
<dbReference type="GO" id="GO:0051500">
    <property type="term" value="F:D-tyrosyl-tRNA(Tyr) deacylase activity"/>
    <property type="evidence" value="ECO:0007669"/>
    <property type="project" value="TreeGrafter"/>
</dbReference>
<dbReference type="GO" id="GO:0106026">
    <property type="term" value="F:Gly-tRNA(Ala) deacylase activity"/>
    <property type="evidence" value="ECO:0007669"/>
    <property type="project" value="UniProtKB-UniRule"/>
</dbReference>
<dbReference type="GO" id="GO:0043908">
    <property type="term" value="F:Ser(Gly)-tRNA(Ala) hydrolase activity"/>
    <property type="evidence" value="ECO:0007669"/>
    <property type="project" value="UniProtKB-UniRule"/>
</dbReference>
<dbReference type="GO" id="GO:0000049">
    <property type="term" value="F:tRNA binding"/>
    <property type="evidence" value="ECO:0007669"/>
    <property type="project" value="UniProtKB-UniRule"/>
</dbReference>
<dbReference type="GO" id="GO:0019478">
    <property type="term" value="P:D-amino acid catabolic process"/>
    <property type="evidence" value="ECO:0007669"/>
    <property type="project" value="UniProtKB-UniRule"/>
</dbReference>
<dbReference type="CDD" id="cd00563">
    <property type="entry name" value="Dtyr_deacylase"/>
    <property type="match status" value="1"/>
</dbReference>
<dbReference type="FunFam" id="3.50.80.10:FF:000001">
    <property type="entry name" value="D-aminoacyl-tRNA deacylase"/>
    <property type="match status" value="1"/>
</dbReference>
<dbReference type="Gene3D" id="3.50.80.10">
    <property type="entry name" value="D-tyrosyl-tRNA(Tyr) deacylase"/>
    <property type="match status" value="1"/>
</dbReference>
<dbReference type="HAMAP" id="MF_00518">
    <property type="entry name" value="Deacylase_Dtd"/>
    <property type="match status" value="1"/>
</dbReference>
<dbReference type="InterPro" id="IPR003732">
    <property type="entry name" value="Daa-tRNA_deacyls_DTD"/>
</dbReference>
<dbReference type="InterPro" id="IPR023509">
    <property type="entry name" value="DTD-like_sf"/>
</dbReference>
<dbReference type="NCBIfam" id="TIGR00256">
    <property type="entry name" value="D-aminoacyl-tRNA deacylase"/>
    <property type="match status" value="1"/>
</dbReference>
<dbReference type="PANTHER" id="PTHR10472:SF5">
    <property type="entry name" value="D-AMINOACYL-TRNA DEACYLASE 1"/>
    <property type="match status" value="1"/>
</dbReference>
<dbReference type="PANTHER" id="PTHR10472">
    <property type="entry name" value="D-TYROSYL-TRNA TYR DEACYLASE"/>
    <property type="match status" value="1"/>
</dbReference>
<dbReference type="Pfam" id="PF02580">
    <property type="entry name" value="Tyr_Deacylase"/>
    <property type="match status" value="1"/>
</dbReference>
<dbReference type="SUPFAM" id="SSF69500">
    <property type="entry name" value="DTD-like"/>
    <property type="match status" value="1"/>
</dbReference>
<evidence type="ECO:0000255" key="1">
    <source>
        <dbReference type="HAMAP-Rule" id="MF_00518"/>
    </source>
</evidence>
<organism>
    <name type="scientific">Oenococcus oeni (strain ATCC BAA-331 / PSU-1)</name>
    <dbReference type="NCBI Taxonomy" id="203123"/>
    <lineage>
        <taxon>Bacteria</taxon>
        <taxon>Bacillati</taxon>
        <taxon>Bacillota</taxon>
        <taxon>Bacilli</taxon>
        <taxon>Lactobacillales</taxon>
        <taxon>Lactobacillaceae</taxon>
        <taxon>Oenococcus</taxon>
    </lineage>
</organism>
<comment type="function">
    <text evidence="1">An aminoacyl-tRNA editing enzyme that deacylates mischarged D-aminoacyl-tRNAs. Also deacylates mischarged glycyl-tRNA(Ala), protecting cells against glycine mischarging by AlaRS. Acts via tRNA-based rather than protein-based catalysis; rejects L-amino acids rather than detecting D-amino acids in the active site. By recycling D-aminoacyl-tRNA to D-amino acids and free tRNA molecules, this enzyme counteracts the toxicity associated with the formation of D-aminoacyl-tRNA entities in vivo and helps enforce protein L-homochirality.</text>
</comment>
<comment type="catalytic activity">
    <reaction evidence="1">
        <text>glycyl-tRNA(Ala) + H2O = tRNA(Ala) + glycine + H(+)</text>
        <dbReference type="Rhea" id="RHEA:53744"/>
        <dbReference type="Rhea" id="RHEA-COMP:9657"/>
        <dbReference type="Rhea" id="RHEA-COMP:13640"/>
        <dbReference type="ChEBI" id="CHEBI:15377"/>
        <dbReference type="ChEBI" id="CHEBI:15378"/>
        <dbReference type="ChEBI" id="CHEBI:57305"/>
        <dbReference type="ChEBI" id="CHEBI:78442"/>
        <dbReference type="ChEBI" id="CHEBI:78522"/>
        <dbReference type="EC" id="3.1.1.96"/>
    </reaction>
</comment>
<comment type="catalytic activity">
    <reaction evidence="1">
        <text>a D-aminoacyl-tRNA + H2O = a tRNA + a D-alpha-amino acid + H(+)</text>
        <dbReference type="Rhea" id="RHEA:13953"/>
        <dbReference type="Rhea" id="RHEA-COMP:10123"/>
        <dbReference type="Rhea" id="RHEA-COMP:10124"/>
        <dbReference type="ChEBI" id="CHEBI:15377"/>
        <dbReference type="ChEBI" id="CHEBI:15378"/>
        <dbReference type="ChEBI" id="CHEBI:59871"/>
        <dbReference type="ChEBI" id="CHEBI:78442"/>
        <dbReference type="ChEBI" id="CHEBI:79333"/>
        <dbReference type="EC" id="3.1.1.96"/>
    </reaction>
</comment>
<comment type="subunit">
    <text evidence="1">Homodimer.</text>
</comment>
<comment type="subcellular location">
    <subcellularLocation>
        <location evidence="1">Cytoplasm</location>
    </subcellularLocation>
</comment>
<comment type="domain">
    <text evidence="1">A Gly-cisPro motif from one monomer fits into the active site of the other monomer to allow specific chiral rejection of L-amino acids.</text>
</comment>
<comment type="similarity">
    <text evidence="1">Belongs to the DTD family.</text>
</comment>
<sequence>MRIVLQKVSSAQVSVGEKILGEIGVGFVLLVGIENTDGKEEVDYLARKISHLRVFADQNDKMNLSITDVKGSILSISQFTLYADTKKGNRPSFINAGDPEHAKTVYQAFNQALMNHNLKVATGEFGAHMEVKLENDGPVTIIFDTDHK</sequence>
<protein>
    <recommendedName>
        <fullName evidence="1">D-aminoacyl-tRNA deacylase</fullName>
        <shortName evidence="1">DTD</shortName>
        <ecNumber evidence="1">3.1.1.96</ecNumber>
    </recommendedName>
    <alternativeName>
        <fullName evidence="1">Gly-tRNA(Ala) deacylase</fullName>
    </alternativeName>
</protein>
<name>DTD_OENOB</name>
<gene>
    <name evidence="1" type="primary">dtd</name>
    <name type="ordered locus">OEOE_0019</name>
</gene>
<feature type="chain" id="PRO_1000050862" description="D-aminoacyl-tRNA deacylase">
    <location>
        <begin position="1"/>
        <end position="148"/>
    </location>
</feature>
<feature type="short sequence motif" description="Gly-cisPro motif, important for rejection of L-amino acids" evidence="1">
    <location>
        <begin position="137"/>
        <end position="138"/>
    </location>
</feature>
<accession>Q04HP9</accession>
<proteinExistence type="inferred from homology"/>
<reference key="1">
    <citation type="journal article" date="2006" name="Proc. Natl. Acad. Sci. U.S.A.">
        <title>Comparative genomics of the lactic acid bacteria.</title>
        <authorList>
            <person name="Makarova K.S."/>
            <person name="Slesarev A."/>
            <person name="Wolf Y.I."/>
            <person name="Sorokin A."/>
            <person name="Mirkin B."/>
            <person name="Koonin E.V."/>
            <person name="Pavlov A."/>
            <person name="Pavlova N."/>
            <person name="Karamychev V."/>
            <person name="Polouchine N."/>
            <person name="Shakhova V."/>
            <person name="Grigoriev I."/>
            <person name="Lou Y."/>
            <person name="Rohksar D."/>
            <person name="Lucas S."/>
            <person name="Huang K."/>
            <person name="Goodstein D.M."/>
            <person name="Hawkins T."/>
            <person name="Plengvidhya V."/>
            <person name="Welker D."/>
            <person name="Hughes J."/>
            <person name="Goh Y."/>
            <person name="Benson A."/>
            <person name="Baldwin K."/>
            <person name="Lee J.-H."/>
            <person name="Diaz-Muniz I."/>
            <person name="Dosti B."/>
            <person name="Smeianov V."/>
            <person name="Wechter W."/>
            <person name="Barabote R."/>
            <person name="Lorca G."/>
            <person name="Altermann E."/>
            <person name="Barrangou R."/>
            <person name="Ganesan B."/>
            <person name="Xie Y."/>
            <person name="Rawsthorne H."/>
            <person name="Tamir D."/>
            <person name="Parker C."/>
            <person name="Breidt F."/>
            <person name="Broadbent J.R."/>
            <person name="Hutkins R."/>
            <person name="O'Sullivan D."/>
            <person name="Steele J."/>
            <person name="Unlu G."/>
            <person name="Saier M.H. Jr."/>
            <person name="Klaenhammer T."/>
            <person name="Richardson P."/>
            <person name="Kozyavkin S."/>
            <person name="Weimer B.C."/>
            <person name="Mills D.A."/>
        </authorList>
    </citation>
    <scope>NUCLEOTIDE SEQUENCE [LARGE SCALE GENOMIC DNA]</scope>
    <source>
        <strain>ATCC BAA-331 / PSU-1</strain>
    </source>
</reference>